<gene>
    <name type="ordered locus">XCC4136</name>
</gene>
<organism>
    <name type="scientific">Xanthomonas campestris pv. campestris (strain ATCC 33913 / DSM 3586 / NCPPB 528 / LMG 568 / P 25)</name>
    <dbReference type="NCBI Taxonomy" id="190485"/>
    <lineage>
        <taxon>Bacteria</taxon>
        <taxon>Pseudomonadati</taxon>
        <taxon>Pseudomonadota</taxon>
        <taxon>Gammaproteobacteria</taxon>
        <taxon>Lysobacterales</taxon>
        <taxon>Lysobacteraceae</taxon>
        <taxon>Xanthomonas</taxon>
    </lineage>
</organism>
<sequence length="222" mass="24079">MTETLPTPVLDTAQARVLGCLIEKEATTPDAYPLTVNAAQVAANQKTAREPVLTLQTGKVHHALRQLETLGLVRQQFSSRAERYEHRLGSALDLTRQQVAVIGLLLLRGPQTLGELFARSERLARFNDSDDVRHHLERLIQRGLAVQLPRASGQREDRYAHLLSGELDLDALQAAAARAAPSARSGADSSELEARVLSLETTVAELQDALSALQARLDAAGA</sequence>
<reference key="1">
    <citation type="journal article" date="2002" name="Nature">
        <title>Comparison of the genomes of two Xanthomonas pathogens with differing host specificities.</title>
        <authorList>
            <person name="da Silva A.C.R."/>
            <person name="Ferro J.A."/>
            <person name="Reinach F.C."/>
            <person name="Farah C.S."/>
            <person name="Furlan L.R."/>
            <person name="Quaggio R.B."/>
            <person name="Monteiro-Vitorello C.B."/>
            <person name="Van Sluys M.A."/>
            <person name="Almeida N.F. Jr."/>
            <person name="Alves L.M.C."/>
            <person name="do Amaral A.M."/>
            <person name="Bertolini M.C."/>
            <person name="Camargo L.E.A."/>
            <person name="Camarotte G."/>
            <person name="Cannavan F."/>
            <person name="Cardozo J."/>
            <person name="Chambergo F."/>
            <person name="Ciapina L.P."/>
            <person name="Cicarelli R.M.B."/>
            <person name="Coutinho L.L."/>
            <person name="Cursino-Santos J.R."/>
            <person name="El-Dorry H."/>
            <person name="Faria J.B."/>
            <person name="Ferreira A.J.S."/>
            <person name="Ferreira R.C.C."/>
            <person name="Ferro M.I.T."/>
            <person name="Formighieri E.F."/>
            <person name="Franco M.C."/>
            <person name="Greggio C.C."/>
            <person name="Gruber A."/>
            <person name="Katsuyama A.M."/>
            <person name="Kishi L.T."/>
            <person name="Leite R.P."/>
            <person name="Lemos E.G.M."/>
            <person name="Lemos M.V.F."/>
            <person name="Locali E.C."/>
            <person name="Machado M.A."/>
            <person name="Madeira A.M.B.N."/>
            <person name="Martinez-Rossi N.M."/>
            <person name="Martins E.C."/>
            <person name="Meidanis J."/>
            <person name="Menck C.F.M."/>
            <person name="Miyaki C.Y."/>
            <person name="Moon D.H."/>
            <person name="Moreira L.M."/>
            <person name="Novo M.T.M."/>
            <person name="Okura V.K."/>
            <person name="Oliveira M.C."/>
            <person name="Oliveira V.R."/>
            <person name="Pereira H.A."/>
            <person name="Rossi A."/>
            <person name="Sena J.A.D."/>
            <person name="Silva C."/>
            <person name="de Souza R.F."/>
            <person name="Spinola L.A.F."/>
            <person name="Takita M.A."/>
            <person name="Tamura R.E."/>
            <person name="Teixeira E.C."/>
            <person name="Tezza R.I.D."/>
            <person name="Trindade dos Santos M."/>
            <person name="Truffi D."/>
            <person name="Tsai S.M."/>
            <person name="White F.F."/>
            <person name="Setubal J.C."/>
            <person name="Kitajima J.P."/>
        </authorList>
    </citation>
    <scope>NUCLEOTIDE SEQUENCE [LARGE SCALE GENOMIC DNA]</scope>
    <source>
        <strain>ATCC 33913 / DSM 3586 / NCPPB 528 / LMG 568 / P 25</strain>
    </source>
</reference>
<accession>Q8P3D5</accession>
<feature type="chain" id="PRO_0000309445" description="UPF0502 protein XCC4136">
    <location>
        <begin position="1"/>
        <end position="222"/>
    </location>
</feature>
<name>Y4136_XANCP</name>
<evidence type="ECO:0000255" key="1">
    <source>
        <dbReference type="HAMAP-Rule" id="MF_01584"/>
    </source>
</evidence>
<proteinExistence type="inferred from homology"/>
<protein>
    <recommendedName>
        <fullName evidence="1">UPF0502 protein XCC4136</fullName>
    </recommendedName>
</protein>
<comment type="similarity">
    <text evidence="1">Belongs to the UPF0502 family.</text>
</comment>
<keyword id="KW-1185">Reference proteome</keyword>
<dbReference type="EMBL" id="AE008922">
    <property type="protein sequence ID" value="AAM43357.1"/>
    <property type="molecule type" value="Genomic_DNA"/>
</dbReference>
<dbReference type="RefSeq" id="NP_639475.1">
    <property type="nucleotide sequence ID" value="NC_003902.1"/>
</dbReference>
<dbReference type="RefSeq" id="WP_011039205.1">
    <property type="nucleotide sequence ID" value="NC_003902.1"/>
</dbReference>
<dbReference type="SMR" id="Q8P3D5"/>
<dbReference type="EnsemblBacteria" id="AAM43357">
    <property type="protein sequence ID" value="AAM43357"/>
    <property type="gene ID" value="XCC4136"/>
</dbReference>
<dbReference type="KEGG" id="xcc:XCC4136"/>
<dbReference type="PATRIC" id="fig|190485.4.peg.4432"/>
<dbReference type="eggNOG" id="COG3132">
    <property type="taxonomic scope" value="Bacteria"/>
</dbReference>
<dbReference type="HOGENOM" id="CLU_057831_2_0_6"/>
<dbReference type="OrthoDB" id="9784785at2"/>
<dbReference type="Proteomes" id="UP000001010">
    <property type="component" value="Chromosome"/>
</dbReference>
<dbReference type="Gene3D" id="1.10.10.10">
    <property type="entry name" value="Winged helix-like DNA-binding domain superfamily/Winged helix DNA-binding domain"/>
    <property type="match status" value="2"/>
</dbReference>
<dbReference type="HAMAP" id="MF_01584">
    <property type="entry name" value="UPF0502"/>
    <property type="match status" value="1"/>
</dbReference>
<dbReference type="InterPro" id="IPR007432">
    <property type="entry name" value="DUF480"/>
</dbReference>
<dbReference type="InterPro" id="IPR036388">
    <property type="entry name" value="WH-like_DNA-bd_sf"/>
</dbReference>
<dbReference type="InterPro" id="IPR036390">
    <property type="entry name" value="WH_DNA-bd_sf"/>
</dbReference>
<dbReference type="PANTHER" id="PTHR38768">
    <property type="entry name" value="UPF0502 PROTEIN YCEH"/>
    <property type="match status" value="1"/>
</dbReference>
<dbReference type="PANTHER" id="PTHR38768:SF1">
    <property type="entry name" value="UPF0502 PROTEIN YCEH"/>
    <property type="match status" value="1"/>
</dbReference>
<dbReference type="Pfam" id="PF04337">
    <property type="entry name" value="DUF480"/>
    <property type="match status" value="1"/>
</dbReference>
<dbReference type="SUPFAM" id="SSF46785">
    <property type="entry name" value="Winged helix' DNA-binding domain"/>
    <property type="match status" value="2"/>
</dbReference>